<dbReference type="EC" id="1.4.3.5" evidence="1"/>
<dbReference type="EMBL" id="AE005174">
    <property type="protein sequence ID" value="AAG56627.1"/>
    <property type="molecule type" value="Genomic_DNA"/>
</dbReference>
<dbReference type="EMBL" id="BA000007">
    <property type="protein sequence ID" value="BAB35770.1"/>
    <property type="molecule type" value="Genomic_DNA"/>
</dbReference>
<dbReference type="PIR" id="C90922">
    <property type="entry name" value="C90922"/>
</dbReference>
<dbReference type="PIR" id="G85770">
    <property type="entry name" value="G85770"/>
</dbReference>
<dbReference type="RefSeq" id="NP_310374.1">
    <property type="nucleotide sequence ID" value="NC_002695.1"/>
</dbReference>
<dbReference type="RefSeq" id="WP_001282321.1">
    <property type="nucleotide sequence ID" value="NZ_VOAI01000007.1"/>
</dbReference>
<dbReference type="SMR" id="Q8X647"/>
<dbReference type="STRING" id="155864.Z2652"/>
<dbReference type="GeneID" id="912730"/>
<dbReference type="KEGG" id="ece:Z2652"/>
<dbReference type="KEGG" id="ecs:ECs_2347"/>
<dbReference type="PATRIC" id="fig|386585.9.peg.2456"/>
<dbReference type="eggNOG" id="COG0259">
    <property type="taxonomic scope" value="Bacteria"/>
</dbReference>
<dbReference type="HOGENOM" id="CLU_032263_2_2_6"/>
<dbReference type="OMA" id="AYFRTRP"/>
<dbReference type="UniPathway" id="UPA01068">
    <property type="reaction ID" value="UER00304"/>
</dbReference>
<dbReference type="UniPathway" id="UPA01068">
    <property type="reaction ID" value="UER00305"/>
</dbReference>
<dbReference type="Proteomes" id="UP000000558">
    <property type="component" value="Chromosome"/>
</dbReference>
<dbReference type="Proteomes" id="UP000002519">
    <property type="component" value="Chromosome"/>
</dbReference>
<dbReference type="GO" id="GO:0010181">
    <property type="term" value="F:FMN binding"/>
    <property type="evidence" value="ECO:0007669"/>
    <property type="project" value="UniProtKB-UniRule"/>
</dbReference>
<dbReference type="GO" id="GO:0004733">
    <property type="term" value="F:pyridoxamine phosphate oxidase activity"/>
    <property type="evidence" value="ECO:0007669"/>
    <property type="project" value="UniProtKB-UniRule"/>
</dbReference>
<dbReference type="GO" id="GO:0008615">
    <property type="term" value="P:pyridoxine biosynthetic process"/>
    <property type="evidence" value="ECO:0007669"/>
    <property type="project" value="UniProtKB-KW"/>
</dbReference>
<dbReference type="FunFam" id="2.30.110.10:FF:000001">
    <property type="entry name" value="Pyridoxine/pyridoxamine 5'-phosphate oxidase"/>
    <property type="match status" value="1"/>
</dbReference>
<dbReference type="Gene3D" id="2.30.110.10">
    <property type="entry name" value="Electron Transport, Fmn-binding Protein, Chain A"/>
    <property type="match status" value="1"/>
</dbReference>
<dbReference type="HAMAP" id="MF_01629">
    <property type="entry name" value="PdxH"/>
    <property type="match status" value="1"/>
</dbReference>
<dbReference type="InterPro" id="IPR000659">
    <property type="entry name" value="Pyridox_Oxase"/>
</dbReference>
<dbReference type="InterPro" id="IPR019740">
    <property type="entry name" value="Pyridox_Oxase_CS"/>
</dbReference>
<dbReference type="InterPro" id="IPR011576">
    <property type="entry name" value="Pyridox_Oxase_N"/>
</dbReference>
<dbReference type="InterPro" id="IPR019576">
    <property type="entry name" value="Pyridoxamine_oxidase_dimer_C"/>
</dbReference>
<dbReference type="InterPro" id="IPR012349">
    <property type="entry name" value="Split_barrel_FMN-bd"/>
</dbReference>
<dbReference type="NCBIfam" id="TIGR00558">
    <property type="entry name" value="pdxH"/>
    <property type="match status" value="1"/>
</dbReference>
<dbReference type="NCBIfam" id="NF004231">
    <property type="entry name" value="PRK05679.1"/>
    <property type="match status" value="1"/>
</dbReference>
<dbReference type="PANTHER" id="PTHR10851:SF0">
    <property type="entry name" value="PYRIDOXINE-5'-PHOSPHATE OXIDASE"/>
    <property type="match status" value="1"/>
</dbReference>
<dbReference type="PANTHER" id="PTHR10851">
    <property type="entry name" value="PYRIDOXINE-5-PHOSPHATE OXIDASE"/>
    <property type="match status" value="1"/>
</dbReference>
<dbReference type="Pfam" id="PF10590">
    <property type="entry name" value="PNP_phzG_C"/>
    <property type="match status" value="1"/>
</dbReference>
<dbReference type="Pfam" id="PF01243">
    <property type="entry name" value="PNPOx_N"/>
    <property type="match status" value="1"/>
</dbReference>
<dbReference type="PIRSF" id="PIRSF000190">
    <property type="entry name" value="Pyd_amn-ph_oxd"/>
    <property type="match status" value="1"/>
</dbReference>
<dbReference type="SUPFAM" id="SSF50475">
    <property type="entry name" value="FMN-binding split barrel"/>
    <property type="match status" value="1"/>
</dbReference>
<dbReference type="PROSITE" id="PS01064">
    <property type="entry name" value="PYRIDOX_OXIDASE"/>
    <property type="match status" value="1"/>
</dbReference>
<feature type="chain" id="PRO_0000167707" description="Pyridoxine/pyridoxamine 5'-phosphate oxidase">
    <location>
        <begin position="1"/>
        <end position="218"/>
    </location>
</feature>
<feature type="binding site" evidence="1">
    <location>
        <begin position="14"/>
        <end position="17"/>
    </location>
    <ligand>
        <name>substrate</name>
    </ligand>
</feature>
<feature type="binding site" evidence="1">
    <location>
        <begin position="67"/>
        <end position="72"/>
    </location>
    <ligand>
        <name>FMN</name>
        <dbReference type="ChEBI" id="CHEBI:58210"/>
    </ligand>
</feature>
<feature type="binding site" evidence="1">
    <location>
        <position position="72"/>
    </location>
    <ligand>
        <name>substrate</name>
    </ligand>
</feature>
<feature type="binding site" evidence="1">
    <location>
        <begin position="82"/>
        <end position="83"/>
    </location>
    <ligand>
        <name>FMN</name>
        <dbReference type="ChEBI" id="CHEBI:58210"/>
    </ligand>
</feature>
<feature type="binding site" evidence="1">
    <location>
        <position position="88"/>
    </location>
    <ligand>
        <name>FMN</name>
        <dbReference type="ChEBI" id="CHEBI:58210"/>
    </ligand>
</feature>
<feature type="binding site" evidence="1">
    <location>
        <position position="89"/>
    </location>
    <ligand>
        <name>FMN</name>
        <dbReference type="ChEBI" id="CHEBI:58210"/>
    </ligand>
</feature>
<feature type="binding site" evidence="1">
    <location>
        <position position="111"/>
    </location>
    <ligand>
        <name>FMN</name>
        <dbReference type="ChEBI" id="CHEBI:58210"/>
    </ligand>
</feature>
<feature type="binding site" evidence="1">
    <location>
        <position position="129"/>
    </location>
    <ligand>
        <name>substrate</name>
    </ligand>
</feature>
<feature type="binding site" evidence="1">
    <location>
        <position position="133"/>
    </location>
    <ligand>
        <name>substrate</name>
    </ligand>
</feature>
<feature type="binding site" evidence="1">
    <location>
        <position position="137"/>
    </location>
    <ligand>
        <name>substrate</name>
    </ligand>
</feature>
<feature type="binding site" evidence="1">
    <location>
        <begin position="146"/>
        <end position="147"/>
    </location>
    <ligand>
        <name>FMN</name>
        <dbReference type="ChEBI" id="CHEBI:58210"/>
    </ligand>
</feature>
<feature type="binding site" evidence="1">
    <location>
        <position position="191"/>
    </location>
    <ligand>
        <name>FMN</name>
        <dbReference type="ChEBI" id="CHEBI:58210"/>
    </ligand>
</feature>
<feature type="binding site" evidence="1">
    <location>
        <begin position="197"/>
        <end position="199"/>
    </location>
    <ligand>
        <name>substrate</name>
    </ligand>
</feature>
<feature type="binding site" evidence="1">
    <location>
        <position position="201"/>
    </location>
    <ligand>
        <name>FMN</name>
        <dbReference type="ChEBI" id="CHEBI:58210"/>
    </ligand>
</feature>
<keyword id="KW-0285">Flavoprotein</keyword>
<keyword id="KW-0288">FMN</keyword>
<keyword id="KW-0560">Oxidoreductase</keyword>
<keyword id="KW-0664">Pyridoxine biosynthesis</keyword>
<keyword id="KW-1185">Reference proteome</keyword>
<reference key="1">
    <citation type="journal article" date="2001" name="Nature">
        <title>Genome sequence of enterohaemorrhagic Escherichia coli O157:H7.</title>
        <authorList>
            <person name="Perna N.T."/>
            <person name="Plunkett G. III"/>
            <person name="Burland V."/>
            <person name="Mau B."/>
            <person name="Glasner J.D."/>
            <person name="Rose D.J."/>
            <person name="Mayhew G.F."/>
            <person name="Evans P.S."/>
            <person name="Gregor J."/>
            <person name="Kirkpatrick H.A."/>
            <person name="Posfai G."/>
            <person name="Hackett J."/>
            <person name="Klink S."/>
            <person name="Boutin A."/>
            <person name="Shao Y."/>
            <person name="Miller L."/>
            <person name="Grotbeck E.J."/>
            <person name="Davis N.W."/>
            <person name="Lim A."/>
            <person name="Dimalanta E.T."/>
            <person name="Potamousis K."/>
            <person name="Apodaca J."/>
            <person name="Anantharaman T.S."/>
            <person name="Lin J."/>
            <person name="Yen G."/>
            <person name="Schwartz D.C."/>
            <person name="Welch R.A."/>
            <person name="Blattner F.R."/>
        </authorList>
    </citation>
    <scope>NUCLEOTIDE SEQUENCE [LARGE SCALE GENOMIC DNA]</scope>
    <source>
        <strain>O157:H7 / EDL933 / ATCC 700927 / EHEC</strain>
    </source>
</reference>
<reference key="2">
    <citation type="journal article" date="2001" name="DNA Res.">
        <title>Complete genome sequence of enterohemorrhagic Escherichia coli O157:H7 and genomic comparison with a laboratory strain K-12.</title>
        <authorList>
            <person name="Hayashi T."/>
            <person name="Makino K."/>
            <person name="Ohnishi M."/>
            <person name="Kurokawa K."/>
            <person name="Ishii K."/>
            <person name="Yokoyama K."/>
            <person name="Han C.-G."/>
            <person name="Ohtsubo E."/>
            <person name="Nakayama K."/>
            <person name="Murata T."/>
            <person name="Tanaka M."/>
            <person name="Tobe T."/>
            <person name="Iida T."/>
            <person name="Takami H."/>
            <person name="Honda T."/>
            <person name="Sasakawa C."/>
            <person name="Ogasawara N."/>
            <person name="Yasunaga T."/>
            <person name="Kuhara S."/>
            <person name="Shiba T."/>
            <person name="Hattori M."/>
            <person name="Shinagawa H."/>
        </authorList>
    </citation>
    <scope>NUCLEOTIDE SEQUENCE [LARGE SCALE GENOMIC DNA]</scope>
    <source>
        <strain>O157:H7 / Sakai / RIMD 0509952 / EHEC</strain>
    </source>
</reference>
<name>PDXH_ECO57</name>
<accession>Q8X647</accession>
<accession>Q7ADK5</accession>
<organism>
    <name type="scientific">Escherichia coli O157:H7</name>
    <dbReference type="NCBI Taxonomy" id="83334"/>
    <lineage>
        <taxon>Bacteria</taxon>
        <taxon>Pseudomonadati</taxon>
        <taxon>Pseudomonadota</taxon>
        <taxon>Gammaproteobacteria</taxon>
        <taxon>Enterobacterales</taxon>
        <taxon>Enterobacteriaceae</taxon>
        <taxon>Escherichia</taxon>
    </lineage>
</organism>
<comment type="function">
    <text evidence="1">Catalyzes the oxidation of either pyridoxine 5'-phosphate (PNP) or pyridoxamine 5'-phosphate (PMP) into pyridoxal 5'-phosphate (PLP).</text>
</comment>
<comment type="catalytic activity">
    <reaction evidence="1">
        <text>pyridoxamine 5'-phosphate + O2 + H2O = pyridoxal 5'-phosphate + H2O2 + NH4(+)</text>
        <dbReference type="Rhea" id="RHEA:15817"/>
        <dbReference type="ChEBI" id="CHEBI:15377"/>
        <dbReference type="ChEBI" id="CHEBI:15379"/>
        <dbReference type="ChEBI" id="CHEBI:16240"/>
        <dbReference type="ChEBI" id="CHEBI:28938"/>
        <dbReference type="ChEBI" id="CHEBI:58451"/>
        <dbReference type="ChEBI" id="CHEBI:597326"/>
        <dbReference type="EC" id="1.4.3.5"/>
    </reaction>
</comment>
<comment type="catalytic activity">
    <reaction evidence="1">
        <text>pyridoxine 5'-phosphate + O2 = pyridoxal 5'-phosphate + H2O2</text>
        <dbReference type="Rhea" id="RHEA:15149"/>
        <dbReference type="ChEBI" id="CHEBI:15379"/>
        <dbReference type="ChEBI" id="CHEBI:16240"/>
        <dbReference type="ChEBI" id="CHEBI:58589"/>
        <dbReference type="ChEBI" id="CHEBI:597326"/>
        <dbReference type="EC" id="1.4.3.5"/>
    </reaction>
</comment>
<comment type="cofactor">
    <cofactor evidence="1">
        <name>FMN</name>
        <dbReference type="ChEBI" id="CHEBI:58210"/>
    </cofactor>
    <text evidence="1">Binds 1 FMN per subunit.</text>
</comment>
<comment type="pathway">
    <text evidence="1">Cofactor metabolism; pyridoxal 5'-phosphate salvage; pyridoxal 5'-phosphate from pyridoxamine 5'-phosphate: step 1/1.</text>
</comment>
<comment type="pathway">
    <text evidence="1">Cofactor metabolism; pyridoxal 5'-phosphate salvage; pyridoxal 5'-phosphate from pyridoxine 5'-phosphate: step 1/1.</text>
</comment>
<comment type="subunit">
    <text evidence="1">Homodimer.</text>
</comment>
<comment type="similarity">
    <text evidence="1">Belongs to the pyridoxamine 5'-phosphate oxidase family.</text>
</comment>
<gene>
    <name evidence="1" type="primary">pdxH</name>
    <name type="ordered locus">Z2652</name>
    <name type="ordered locus">ECs2347</name>
</gene>
<proteinExistence type="inferred from homology"/>
<evidence type="ECO:0000255" key="1">
    <source>
        <dbReference type="HAMAP-Rule" id="MF_01629"/>
    </source>
</evidence>
<protein>
    <recommendedName>
        <fullName evidence="1">Pyridoxine/pyridoxamine 5'-phosphate oxidase</fullName>
        <ecNumber evidence="1">1.4.3.5</ecNumber>
    </recommendedName>
    <alternativeName>
        <fullName evidence="1">PNP/PMP oxidase</fullName>
        <shortName evidence="1">PNPOx</shortName>
    </alternativeName>
    <alternativeName>
        <fullName evidence="1">Pyridoxal 5'-phosphate synthase</fullName>
    </alternativeName>
</protein>
<sequence length="218" mass="25561">MSDNDELQQIAHLRREYTKGGLRRRDLPADPLTLFERWLSQACEAKLADPTAMVVATVDEHGQPYQRIVLLKHYDEKGMVFYTNLGSRKAHQIENNPRVSLLFPWHTLERQVMVIGKAERLSTLEVMKYFHSRPRDSQIGSWVSKQSSRISARGILESKFLELKQKFQQGEVPLPSFWGGFRVSLEQIEFWQGGEHRLHDRFLYQRENDAWKIDRLAP</sequence>